<reference key="1">
    <citation type="journal article" date="2009" name="PLoS ONE">
        <title>Salmonella paratyphi C: genetic divergence from Salmonella choleraesuis and pathogenic convergence with Salmonella typhi.</title>
        <authorList>
            <person name="Liu W.-Q."/>
            <person name="Feng Y."/>
            <person name="Wang Y."/>
            <person name="Zou Q.-H."/>
            <person name="Chen F."/>
            <person name="Guo J.-T."/>
            <person name="Peng Y.-H."/>
            <person name="Jin Y."/>
            <person name="Li Y.-G."/>
            <person name="Hu S.-N."/>
            <person name="Johnston R.N."/>
            <person name="Liu G.-R."/>
            <person name="Liu S.-L."/>
        </authorList>
    </citation>
    <scope>NUCLEOTIDE SEQUENCE [LARGE SCALE GENOMIC DNA]</scope>
    <source>
        <strain>RKS4594</strain>
    </source>
</reference>
<dbReference type="EC" id="3.1.1.96" evidence="1"/>
<dbReference type="EMBL" id="CP000857">
    <property type="protein sequence ID" value="ACN48196.1"/>
    <property type="molecule type" value="Genomic_DNA"/>
</dbReference>
<dbReference type="RefSeq" id="WP_000560967.1">
    <property type="nucleotide sequence ID" value="NC_012125.1"/>
</dbReference>
<dbReference type="SMR" id="C0Q3J4"/>
<dbReference type="KEGG" id="sei:SPC_4131"/>
<dbReference type="HOGENOM" id="CLU_076901_1_0_6"/>
<dbReference type="Proteomes" id="UP000001599">
    <property type="component" value="Chromosome"/>
</dbReference>
<dbReference type="GO" id="GO:0005737">
    <property type="term" value="C:cytoplasm"/>
    <property type="evidence" value="ECO:0007669"/>
    <property type="project" value="UniProtKB-SubCell"/>
</dbReference>
<dbReference type="GO" id="GO:0051500">
    <property type="term" value="F:D-tyrosyl-tRNA(Tyr) deacylase activity"/>
    <property type="evidence" value="ECO:0007669"/>
    <property type="project" value="TreeGrafter"/>
</dbReference>
<dbReference type="GO" id="GO:0106026">
    <property type="term" value="F:Gly-tRNA(Ala) deacylase activity"/>
    <property type="evidence" value="ECO:0007669"/>
    <property type="project" value="UniProtKB-UniRule"/>
</dbReference>
<dbReference type="GO" id="GO:0043908">
    <property type="term" value="F:Ser(Gly)-tRNA(Ala) hydrolase activity"/>
    <property type="evidence" value="ECO:0007669"/>
    <property type="project" value="UniProtKB-UniRule"/>
</dbReference>
<dbReference type="GO" id="GO:0000049">
    <property type="term" value="F:tRNA binding"/>
    <property type="evidence" value="ECO:0007669"/>
    <property type="project" value="UniProtKB-UniRule"/>
</dbReference>
<dbReference type="GO" id="GO:0019478">
    <property type="term" value="P:D-amino acid catabolic process"/>
    <property type="evidence" value="ECO:0007669"/>
    <property type="project" value="UniProtKB-UniRule"/>
</dbReference>
<dbReference type="CDD" id="cd00563">
    <property type="entry name" value="Dtyr_deacylase"/>
    <property type="match status" value="1"/>
</dbReference>
<dbReference type="FunFam" id="3.50.80.10:FF:000001">
    <property type="entry name" value="D-aminoacyl-tRNA deacylase"/>
    <property type="match status" value="1"/>
</dbReference>
<dbReference type="Gene3D" id="3.50.80.10">
    <property type="entry name" value="D-tyrosyl-tRNA(Tyr) deacylase"/>
    <property type="match status" value="1"/>
</dbReference>
<dbReference type="HAMAP" id="MF_00518">
    <property type="entry name" value="Deacylase_Dtd"/>
    <property type="match status" value="1"/>
</dbReference>
<dbReference type="InterPro" id="IPR003732">
    <property type="entry name" value="Daa-tRNA_deacyls_DTD"/>
</dbReference>
<dbReference type="InterPro" id="IPR023509">
    <property type="entry name" value="DTD-like_sf"/>
</dbReference>
<dbReference type="NCBIfam" id="TIGR00256">
    <property type="entry name" value="D-aminoacyl-tRNA deacylase"/>
    <property type="match status" value="1"/>
</dbReference>
<dbReference type="PANTHER" id="PTHR10472:SF5">
    <property type="entry name" value="D-AMINOACYL-TRNA DEACYLASE 1"/>
    <property type="match status" value="1"/>
</dbReference>
<dbReference type="PANTHER" id="PTHR10472">
    <property type="entry name" value="D-TYROSYL-TRNA TYR DEACYLASE"/>
    <property type="match status" value="1"/>
</dbReference>
<dbReference type="Pfam" id="PF02580">
    <property type="entry name" value="Tyr_Deacylase"/>
    <property type="match status" value="1"/>
</dbReference>
<dbReference type="SUPFAM" id="SSF69500">
    <property type="entry name" value="DTD-like"/>
    <property type="match status" value="1"/>
</dbReference>
<gene>
    <name evidence="1" type="primary">dtd</name>
    <name type="ordered locus">SPC_4131</name>
</gene>
<comment type="function">
    <text evidence="1">An aminoacyl-tRNA editing enzyme that deacylates mischarged D-aminoacyl-tRNAs. Also deacylates mischarged glycyl-tRNA(Ala), protecting cells against glycine mischarging by AlaRS. Acts via tRNA-based rather than protein-based catalysis; rejects L-amino acids rather than detecting D-amino acids in the active site. By recycling D-aminoacyl-tRNA to D-amino acids and free tRNA molecules, this enzyme counteracts the toxicity associated with the formation of D-aminoacyl-tRNA entities in vivo and helps enforce protein L-homochirality.</text>
</comment>
<comment type="catalytic activity">
    <reaction evidence="1">
        <text>glycyl-tRNA(Ala) + H2O = tRNA(Ala) + glycine + H(+)</text>
        <dbReference type="Rhea" id="RHEA:53744"/>
        <dbReference type="Rhea" id="RHEA-COMP:9657"/>
        <dbReference type="Rhea" id="RHEA-COMP:13640"/>
        <dbReference type="ChEBI" id="CHEBI:15377"/>
        <dbReference type="ChEBI" id="CHEBI:15378"/>
        <dbReference type="ChEBI" id="CHEBI:57305"/>
        <dbReference type="ChEBI" id="CHEBI:78442"/>
        <dbReference type="ChEBI" id="CHEBI:78522"/>
        <dbReference type="EC" id="3.1.1.96"/>
    </reaction>
</comment>
<comment type="catalytic activity">
    <reaction evidence="1">
        <text>a D-aminoacyl-tRNA + H2O = a tRNA + a D-alpha-amino acid + H(+)</text>
        <dbReference type="Rhea" id="RHEA:13953"/>
        <dbReference type="Rhea" id="RHEA-COMP:10123"/>
        <dbReference type="Rhea" id="RHEA-COMP:10124"/>
        <dbReference type="ChEBI" id="CHEBI:15377"/>
        <dbReference type="ChEBI" id="CHEBI:15378"/>
        <dbReference type="ChEBI" id="CHEBI:59871"/>
        <dbReference type="ChEBI" id="CHEBI:78442"/>
        <dbReference type="ChEBI" id="CHEBI:79333"/>
        <dbReference type="EC" id="3.1.1.96"/>
    </reaction>
</comment>
<comment type="subunit">
    <text evidence="1">Homodimer.</text>
</comment>
<comment type="subcellular location">
    <subcellularLocation>
        <location evidence="1">Cytoplasm</location>
    </subcellularLocation>
</comment>
<comment type="domain">
    <text evidence="1">A Gly-cisPro motif from one monomer fits into the active site of the other monomer to allow specific chiral rejection of L-amino acids.</text>
</comment>
<comment type="similarity">
    <text evidence="1">Belongs to the DTD family.</text>
</comment>
<sequence length="145" mass="15942">MIALIQRVTRASVTVEDEVTGEIGLGLLVLLGVEKEDDEQKANRLCERVLGYRIFSDADGKMNLNVQQAGGSVLVVSQFTLAADTERGMRPSFSGGAAPDRAQALYEYFVERCRQQAINTQTGRFAADMQVELVNDGPVTFWLQV</sequence>
<protein>
    <recommendedName>
        <fullName evidence="1">D-aminoacyl-tRNA deacylase</fullName>
        <shortName evidence="1">DTD</shortName>
        <ecNumber evidence="1">3.1.1.96</ecNumber>
    </recommendedName>
    <alternativeName>
        <fullName evidence="1">Gly-tRNA(Ala) deacylase</fullName>
    </alternativeName>
</protein>
<name>DTD_SALPC</name>
<accession>C0Q3J4</accession>
<keyword id="KW-0963">Cytoplasm</keyword>
<keyword id="KW-0378">Hydrolase</keyword>
<keyword id="KW-0694">RNA-binding</keyword>
<keyword id="KW-0820">tRNA-binding</keyword>
<feature type="chain" id="PRO_1000146209" description="D-aminoacyl-tRNA deacylase">
    <location>
        <begin position="1"/>
        <end position="145"/>
    </location>
</feature>
<feature type="short sequence motif" description="Gly-cisPro motif, important for rejection of L-amino acids" evidence="1">
    <location>
        <begin position="137"/>
        <end position="138"/>
    </location>
</feature>
<proteinExistence type="inferred from homology"/>
<organism>
    <name type="scientific">Salmonella paratyphi C (strain RKS4594)</name>
    <dbReference type="NCBI Taxonomy" id="476213"/>
    <lineage>
        <taxon>Bacteria</taxon>
        <taxon>Pseudomonadati</taxon>
        <taxon>Pseudomonadota</taxon>
        <taxon>Gammaproteobacteria</taxon>
        <taxon>Enterobacterales</taxon>
        <taxon>Enterobacteriaceae</taxon>
        <taxon>Salmonella</taxon>
    </lineage>
</organism>
<evidence type="ECO:0000255" key="1">
    <source>
        <dbReference type="HAMAP-Rule" id="MF_00518"/>
    </source>
</evidence>